<comment type="function">
    <text evidence="2 5 14">Dehydrogenase, part of the gene cluster that mediates the biosynthesis of melleolides, a range of antifungal and phytotoxic polyketide derivatives composed of an orsellinic acid (OA) moiety esterified to various sesquiterpene alcohols (Probable). The first step in melleolides biosynthesis is performed by the delta(6)-protoilludene synthase PRO1 which catalyzes the cyclization of farnesyl diphosphate to protoilludene (PubMed:21148562). The orsellinic acid synthase armB produces OA by condensing acetyl-CoA with 3 malonyl-CoA units in a three-round chain elongation reaction folowed by a C2-C7 ring closure (By similarity). ArmB further catalyzes the trans-esterification of OA to the various sesquiterpene alcohols resulting from the hydroxylation of protoilludene (By similarity). The melleolides cluster also includes 5 cytochrome P450 monooxygenases, 4 NAD(+)-dependent oxidoreductases, one flavin-dependent oxidoreductase, and one O-methyltransferase (By similarity). The cytochrome P450 monooxygenases may be involved in protoilludene hydroxylation to elaborate melleolides with multiple alcohol groups, such as melleolide D, which carries alcohol functionalities at C-4, C-5, C-10, and C-13 (By similarity). The role of the NAD(+)-dependent enzymes remains unknown (By similarity). Numerous melleolides, including arnamial, show 5'-O-methylation of the aromatic moiety which may be catalyzed by the methyltransferase encoded in the cluster (By similarity). The flavin-dependent oxidoreductase might represent the dehydrogenase yielding the aldehyde in position 1 of arnamial and other melleolides (By similarity). Finally, several halogenase localized outside of the cluster, are able to catalyze the transfer of a single chlorine atom to the melleolide backbone, resulting in a 6'-chloromelleolide product (By similarity).</text>
</comment>
<comment type="cofactor">
    <cofactor evidence="1">
        <name>FAD</name>
        <dbReference type="ChEBI" id="CHEBI:57692"/>
    </cofactor>
</comment>
<comment type="pathway">
    <text evidence="14">Secondary metabolite biosynthesis.</text>
</comment>
<comment type="biotechnology">
    <text evidence="6 7 8 9 10 12">Melleolide sesquiterpene aryl esters are cytotoxic secondary products with anti-cancer potential (PubMed:21376582, PubMed:26952552). Armillaridin shows therapeutic and radiosensitizing effects on human esophageal cancer cells (PubMed:23864890). Armillaridin induces autophagy-associated cell death in human chronic myelogenous leukemia as well as of hepatocellular carcinoma cells (PubMed:27592257, PubMed:31488037). Armillaridin can also inhibit the differentiation and activation of human macrophages and thus might have potential to be developed as a biological response modifier for inflammatory diseases (PubMed:25746621).</text>
</comment>
<comment type="miscellaneous">
    <text evidence="11 13 15">Armillaria species are both devastating forest pathogens and some of the largest and oldest terrestrial organisms on Earth (Probable) (PubMed:31746694). They forage for hosts and achieve immense colony sizes via rhizomorphs, root-like multicellular structures of clonal dispersal (Probable). One genetic Armillaria gallica individual localized in Michigan's Upper Peninsula stands out as exceptionally large, covering hundreds of tree root systems over approximately 75 hectares of the forest floor (PubMed:30963893). Based on observed growth rates of the fungus, the minimum age of this large individual can be estimated as 2500 years (PubMed:30963893).</text>
</comment>
<comment type="similarity">
    <text evidence="14">Belongs to the GMC oxidoreductase family.</text>
</comment>
<accession>A0A2H3D1U1</accession>
<keyword id="KW-0274">FAD</keyword>
<keyword id="KW-0285">Flavoprotein</keyword>
<keyword id="KW-0325">Glycoprotein</keyword>
<keyword id="KW-0560">Oxidoreductase</keyword>
<keyword id="KW-1185">Reference proteome</keyword>
<keyword id="KW-0732">Signal</keyword>
<reference key="1">
    <citation type="journal article" date="2017" name="Nat. Ecol. Evol.">
        <title>Genome expansion and lineage-specific genetic innovations in the forest pathogenic fungi Armillaria.</title>
        <authorList>
            <person name="Sipos G."/>
            <person name="Prasanna A.N."/>
            <person name="Walter M.C."/>
            <person name="O'Connor E."/>
            <person name="Balint B."/>
            <person name="Krizsan K."/>
            <person name="Kiss B."/>
            <person name="Hess J."/>
            <person name="Varga T."/>
            <person name="Slot J."/>
            <person name="Riley R."/>
            <person name="Boka B."/>
            <person name="Rigling D."/>
            <person name="Barry K."/>
            <person name="Lee J."/>
            <person name="Mihaltcheva S."/>
            <person name="LaButti K."/>
            <person name="Lipzen A."/>
            <person name="Waldron R."/>
            <person name="Moloney N.M."/>
            <person name="Sperisen C."/>
            <person name="Kredics L."/>
            <person name="Vagvoelgyi C."/>
            <person name="Patrignani A."/>
            <person name="Fitzpatrick D."/>
            <person name="Nagy I."/>
            <person name="Doyle S."/>
            <person name="Anderson J.B."/>
            <person name="Grigoriev I.V."/>
            <person name="Gueldener U."/>
            <person name="Muensterkoetter M."/>
            <person name="Nagy L.G."/>
        </authorList>
    </citation>
    <scope>NUCLEOTIDE SEQUENCE [LARGE SCALE GENOMIC DNA]</scope>
    <source>
        <strain>Ar21-2</strain>
    </source>
</reference>
<reference key="2">
    <citation type="journal article" date="2011" name="Bioorg. Med. Chem. Lett.">
        <title>In vitro cytotoxicity of melleolide antibiotics: structural and mechanistic aspects.</title>
        <authorList>
            <person name="Bohnert M."/>
            <person name="Miethbauer S."/>
            <person name="Dahse H.M."/>
            <person name="Ziemen J."/>
            <person name="Nett M."/>
            <person name="Hoffmeister D."/>
        </authorList>
    </citation>
    <scope>BIOTECHNOLOGY</scope>
</reference>
<reference key="3">
    <citation type="journal article" date="2011" name="J. Biol. Chem.">
        <title>Cloning and characterization of an Armillaria gallica cDNA encoding protoilludene synthase, which catalyzes the first committed step in the synthesis of antimicrobial melleolides.</title>
        <authorList>
            <person name="Engels B."/>
            <person name="Heinig U."/>
            <person name="Grothe T."/>
            <person name="Stadler M."/>
            <person name="Jennewein S."/>
        </authorList>
    </citation>
    <scope>FUNCTION</scope>
    <source>
        <strain>FU02472</strain>
    </source>
</reference>
<reference key="4">
    <citation type="journal article" date="2013" name="Evid. Based Complement Alternat. Med.">
        <title>Therapeutic and radiosensitizing effects of armillaridin on human esophageal cancer cells.</title>
        <authorList>
            <person name="Chi C.W."/>
            <person name="Chen C.C."/>
            <person name="Chen Y.J."/>
        </authorList>
    </citation>
    <scope>BIOTECHNOLOGY</scope>
</reference>
<reference key="5">
    <citation type="journal article" date="2015" name="Int. J. Med. Mushrooms">
        <title>Armillaridin, a honey medicinal mushroom, Armillaria mellea (higher basidiomycetes) component, inhibits differentiation and activation of human macrophages.</title>
        <authorList>
            <person name="Liu T.P."/>
            <person name="Chen C.C."/>
            <person name="Shiao P.Y."/>
            <person name="Shieh H.R."/>
            <person name="Chen Y.Y."/>
            <person name="Chen Y.J."/>
        </authorList>
    </citation>
    <scope>BIOTECHNOLOGY</scope>
</reference>
<reference key="6">
    <citation type="journal article" date="2016" name="J. Ethnopharmacol.">
        <title>Structure, cytotoxic activity and mechanism of protoilludane sesquiterpene aryl esters from the mycelium of Armillaria mellea.</title>
        <authorList>
            <person name="Li Z."/>
            <person name="Wang Y."/>
            <person name="Jiang B."/>
            <person name="Li W."/>
            <person name="Zheng L."/>
            <person name="Yang X."/>
            <person name="Bao Y."/>
            <person name="Sun L."/>
            <person name="Huang Y."/>
            <person name="Li Y."/>
        </authorList>
    </citation>
    <scope>BIOTECHNOLOGY</scope>
</reference>
<reference key="7">
    <citation type="journal article" date="2016" name="Tumor Biol.">
        <title>Armillaridin induces autophagy-associated cell death in human chronic myelogenous leukemia K562 cells.</title>
        <authorList>
            <person name="Chang W.H."/>
            <person name="Huang H.L."/>
            <person name="Huang W.P."/>
            <person name="Chen C.C."/>
            <person name="Chen Y.J."/>
        </authorList>
    </citation>
    <scope>BIOTECHNOLOGY</scope>
</reference>
<reference key="8">
    <citation type="journal article" date="2018" name="Curr. Biol.">
        <title>Armillaria.</title>
        <authorList>
            <person name="Sipos G."/>
            <person name="Anderson J.B."/>
            <person name="Nagy L.G."/>
        </authorList>
    </citation>
    <scope>MISCELLANEOUS</scope>
</reference>
<reference key="9">
    <citation type="journal article" date="2018" name="Proc. R. Soc. B">
        <title>Clonal evolution and genome stability in a 2500-year-old fungal individual.</title>
        <authorList>
            <person name="Anderson J.B."/>
            <person name="Bruhn J.N."/>
            <person name="Kasimer D."/>
            <person name="Wang H."/>
            <person name="Rodrigue N."/>
            <person name="Smith M.L."/>
        </authorList>
    </citation>
    <scope>MISCELLANEOUS</scope>
</reference>
<reference key="10">
    <citation type="journal article" date="2019" name="Am. J. Chin. Med.">
        <title>Induction of autophagic death of human hepatocellular carcinoma cells by armillaridin from Armillaria mellea.</title>
        <authorList>
            <person name="Leu Y.S."/>
            <person name="Chen Y.J."/>
            <person name="Chen C.C."/>
            <person name="Huang H.L."/>
        </authorList>
    </citation>
    <scope>BIOTECHNOLOGY</scope>
</reference>
<reference key="11">
    <citation type="journal article" date="2020" name="Plant Dis.">
        <title>Susceptibility of garden trees and shrubs to Armillaria root rot.</title>
        <authorList>
            <person name="Cromey M.G."/>
            <person name="Drakulic J."/>
            <person name="Beal E.J."/>
            <person name="Waghorn I.A.G."/>
            <person name="Perry J.N."/>
            <person name="Clover G.R.G."/>
        </authorList>
    </citation>
    <scope>MISCELLANEOUS</scope>
</reference>
<name>ARMD5_ARMGA</name>
<gene>
    <name type="ORF">ARMGADRAFT_1018426</name>
</gene>
<proteinExistence type="evidence at protein level"/>
<organism>
    <name type="scientific">Armillaria gallica</name>
    <name type="common">Bulbous honey fungus</name>
    <name type="synonym">Armillaria bulbosa</name>
    <dbReference type="NCBI Taxonomy" id="47427"/>
    <lineage>
        <taxon>Eukaryota</taxon>
        <taxon>Fungi</taxon>
        <taxon>Dikarya</taxon>
        <taxon>Basidiomycota</taxon>
        <taxon>Agaricomycotina</taxon>
        <taxon>Agaricomycetes</taxon>
        <taxon>Agaricomycetidae</taxon>
        <taxon>Agaricales</taxon>
        <taxon>Marasmiineae</taxon>
        <taxon>Physalacriaceae</taxon>
        <taxon>Armillaria</taxon>
    </lineage>
</organism>
<protein>
    <recommendedName>
        <fullName>Dehydrogenase ARMGADRAFT_1018426</fullName>
        <ecNumber>1.1.1.-</ecNumber>
    </recommendedName>
    <alternativeName>
        <fullName>Melleolide biosynthesis cluster protein ARMGADRAFT_1018426</fullName>
    </alternativeName>
</protein>
<evidence type="ECO:0000250" key="1">
    <source>
        <dbReference type="UniProtKB" id="E4QP00"/>
    </source>
</evidence>
<evidence type="ECO:0000250" key="2">
    <source>
        <dbReference type="UniProtKB" id="I3ZNU9"/>
    </source>
</evidence>
<evidence type="ECO:0000255" key="3"/>
<evidence type="ECO:0000255" key="4">
    <source>
        <dbReference type="PROSITE-ProRule" id="PRU00498"/>
    </source>
</evidence>
<evidence type="ECO:0000269" key="5">
    <source>
    </source>
</evidence>
<evidence type="ECO:0000269" key="6">
    <source>
    </source>
</evidence>
<evidence type="ECO:0000269" key="7">
    <source>
    </source>
</evidence>
<evidence type="ECO:0000269" key="8">
    <source>
    </source>
</evidence>
<evidence type="ECO:0000269" key="9">
    <source>
    </source>
</evidence>
<evidence type="ECO:0000269" key="10">
    <source>
    </source>
</evidence>
<evidence type="ECO:0000269" key="11">
    <source>
    </source>
</evidence>
<evidence type="ECO:0000269" key="12">
    <source>
    </source>
</evidence>
<evidence type="ECO:0000269" key="13">
    <source>
    </source>
</evidence>
<evidence type="ECO:0000305" key="14"/>
<evidence type="ECO:0000305" key="15">
    <source>
    </source>
</evidence>
<feature type="signal peptide" evidence="3">
    <location>
        <begin position="1"/>
        <end position="19"/>
    </location>
</feature>
<feature type="chain" id="PRO_5013904094" description="Dehydrogenase ARMGADRAFT_1018426">
    <location>
        <begin position="20"/>
        <end position="636"/>
    </location>
</feature>
<feature type="active site" description="Proton acceptor" evidence="1">
    <location>
        <position position="570"/>
    </location>
</feature>
<feature type="binding site" evidence="1">
    <location>
        <begin position="49"/>
        <end position="50"/>
    </location>
    <ligand>
        <name>FAD</name>
        <dbReference type="ChEBI" id="CHEBI:57692"/>
    </ligand>
</feature>
<feature type="binding site" evidence="1">
    <location>
        <begin position="70"/>
        <end position="71"/>
    </location>
    <ligand>
        <name>FAD</name>
        <dbReference type="ChEBI" id="CHEBI:57692"/>
    </ligand>
</feature>
<feature type="binding site" evidence="1">
    <location>
        <position position="104"/>
    </location>
    <ligand>
        <name>FAD</name>
        <dbReference type="ChEBI" id="CHEBI:57692"/>
    </ligand>
</feature>
<feature type="binding site" evidence="1">
    <location>
        <begin position="134"/>
        <end position="137"/>
    </location>
    <ligand>
        <name>FAD</name>
        <dbReference type="ChEBI" id="CHEBI:57692"/>
    </ligand>
</feature>
<feature type="binding site" evidence="1">
    <location>
        <position position="280"/>
    </location>
    <ligand>
        <name>FAD</name>
        <dbReference type="ChEBI" id="CHEBI:57692"/>
    </ligand>
</feature>
<feature type="binding site" evidence="1">
    <location>
        <position position="603"/>
    </location>
    <ligand>
        <name>FAD</name>
        <dbReference type="ChEBI" id="CHEBI:57692"/>
    </ligand>
</feature>
<feature type="binding site" evidence="1">
    <location>
        <begin position="614"/>
        <end position="615"/>
    </location>
    <ligand>
        <name>FAD</name>
        <dbReference type="ChEBI" id="CHEBI:57692"/>
    </ligand>
</feature>
<feature type="glycosylation site" description="N-linked (GlcNAc...) asparagine" evidence="4">
    <location>
        <position position="99"/>
    </location>
</feature>
<feature type="glycosylation site" description="N-linked (GlcNAc...) asparagine" evidence="4">
    <location>
        <position position="253"/>
    </location>
</feature>
<feature type="glycosylation site" description="N-linked (GlcNAc...) asparagine" evidence="4">
    <location>
        <position position="333"/>
    </location>
</feature>
<feature type="glycosylation site" description="N-linked (GlcNAc...) asparagine" evidence="4">
    <location>
        <position position="380"/>
    </location>
</feature>
<feature type="glycosylation site" description="N-linked (GlcNAc...) asparagine" evidence="4">
    <location>
        <position position="394"/>
    </location>
</feature>
<feature type="glycosylation site" description="N-linked (GlcNAc...) asparagine" evidence="4">
    <location>
        <position position="498"/>
    </location>
</feature>
<dbReference type="EC" id="1.1.1.-"/>
<dbReference type="EMBL" id="KZ293696">
    <property type="protein sequence ID" value="PBK84748.1"/>
    <property type="molecule type" value="Genomic_DNA"/>
</dbReference>
<dbReference type="SMR" id="A0A2H3D1U1"/>
<dbReference type="STRING" id="47427.A0A2H3D1U1"/>
<dbReference type="InParanoid" id="A0A2H3D1U1"/>
<dbReference type="OMA" id="ERWHAPT"/>
<dbReference type="OrthoDB" id="269227at2759"/>
<dbReference type="Proteomes" id="UP000217790">
    <property type="component" value="Unassembled WGS sequence"/>
</dbReference>
<dbReference type="GO" id="GO:0050660">
    <property type="term" value="F:flavin adenine dinucleotide binding"/>
    <property type="evidence" value="ECO:0007669"/>
    <property type="project" value="InterPro"/>
</dbReference>
<dbReference type="GO" id="GO:0016614">
    <property type="term" value="F:oxidoreductase activity, acting on CH-OH group of donors"/>
    <property type="evidence" value="ECO:0007669"/>
    <property type="project" value="InterPro"/>
</dbReference>
<dbReference type="Gene3D" id="3.50.50.60">
    <property type="entry name" value="FAD/NAD(P)-binding domain"/>
    <property type="match status" value="1"/>
</dbReference>
<dbReference type="Gene3D" id="3.30.560.10">
    <property type="entry name" value="Glucose Oxidase, domain 3"/>
    <property type="match status" value="1"/>
</dbReference>
<dbReference type="InterPro" id="IPR036188">
    <property type="entry name" value="FAD/NAD-bd_sf"/>
</dbReference>
<dbReference type="InterPro" id="IPR012132">
    <property type="entry name" value="GMC_OxRdtase"/>
</dbReference>
<dbReference type="InterPro" id="IPR000172">
    <property type="entry name" value="GMC_OxRdtase_N"/>
</dbReference>
<dbReference type="InterPro" id="IPR007867">
    <property type="entry name" value="GMC_OxRtase_C"/>
</dbReference>
<dbReference type="PANTHER" id="PTHR11552">
    <property type="entry name" value="GLUCOSE-METHANOL-CHOLINE GMC OXIDOREDUCTASE"/>
    <property type="match status" value="1"/>
</dbReference>
<dbReference type="PANTHER" id="PTHR11552:SF201">
    <property type="entry name" value="GLUCOSE-METHANOL-CHOLINE OXIDOREDUCTASE N-TERMINAL DOMAIN-CONTAINING PROTEIN"/>
    <property type="match status" value="1"/>
</dbReference>
<dbReference type="Pfam" id="PF05199">
    <property type="entry name" value="GMC_oxred_C"/>
    <property type="match status" value="1"/>
</dbReference>
<dbReference type="Pfam" id="PF00732">
    <property type="entry name" value="GMC_oxred_N"/>
    <property type="match status" value="1"/>
</dbReference>
<dbReference type="PIRSF" id="PIRSF000137">
    <property type="entry name" value="Alcohol_oxidase"/>
    <property type="match status" value="1"/>
</dbReference>
<dbReference type="SUPFAM" id="SSF54373">
    <property type="entry name" value="FAD-linked reductases, C-terminal domain"/>
    <property type="match status" value="1"/>
</dbReference>
<dbReference type="SUPFAM" id="SSF51905">
    <property type="entry name" value="FAD/NAD(P)-binding domain"/>
    <property type="match status" value="1"/>
</dbReference>
<dbReference type="PROSITE" id="PS00624">
    <property type="entry name" value="GMC_OXRED_2"/>
    <property type="match status" value="1"/>
</dbReference>
<sequence>MPALTYLLLAAIGASTVHSLPSQQSCNAPVTPSSFSSTSLDVVIVGGGTAGLVLASRLSESKKLQVGVIEGGYDRTNDPLIDVPNAANALGYQGAVFGNSTYDWEYTSVPQRGLGGRVLSYPSGKVLGGSSAINGLTIQRGSREDYDAWGNAFGNGPEWTFDALLPYFKRYERWHAPTLSATGDLNSDGLSAVHGTDGRISISYNNFFTGVDIPLTQAGIALGLGPTQNPDGGDDSLFPNFGASHSLDPATGNRSYAANGYYGQTERCRSNLHLLTGAVVTRIIWDKKKATKAVGVEYAVGNDKFTVKASKEVVLSAGSLRSPQILELSGVGNKTLLESLNIPVVVDIPQLGENLQEQFIAGTDFLVRDGVVTLDALGNNATFLAEQQNLYRTNKTGAFTYLSNVNAPTPIRSLVTEDQYKTMRAALDTYLASQTLTPLQIVQYNLVKQFLDGGKVATSSLLVVASGGLVSTPAAGQGYISVVSSPAHPLSRGNVHINTTDPLAYPLIDSAFLTNPWDAQATINVMKFVRRWVAKSDIIESPGTPPQAADEWSDDQWIAYLQSVLGTAHHPVGTAAMASQKLGGVVDPRFKVYGLKNVRIVDASVFPMHIGVAPSSTTYMLAEKAADAIKKDLNAY</sequence>